<gene>
    <name evidence="1" type="primary">dapD</name>
    <name type="ordered locus">PD_0086</name>
</gene>
<proteinExistence type="inferred from homology"/>
<keyword id="KW-0012">Acyltransferase</keyword>
<keyword id="KW-0028">Amino-acid biosynthesis</keyword>
<keyword id="KW-0963">Cytoplasm</keyword>
<keyword id="KW-0220">Diaminopimelate biosynthesis</keyword>
<keyword id="KW-0457">Lysine biosynthesis</keyword>
<keyword id="KW-1185">Reference proteome</keyword>
<keyword id="KW-0677">Repeat</keyword>
<keyword id="KW-0808">Transferase</keyword>
<accession>Q87F51</accession>
<feature type="chain" id="PRO_0000196977" description="2,3,4,5-tetrahydropyridine-2,6-dicarboxylate N-succinyltransferase">
    <location>
        <begin position="1"/>
        <end position="277"/>
    </location>
</feature>
<feature type="binding site" evidence="1">
    <location>
        <position position="106"/>
    </location>
    <ligand>
        <name>substrate</name>
    </ligand>
</feature>
<feature type="binding site" evidence="1">
    <location>
        <position position="143"/>
    </location>
    <ligand>
        <name>substrate</name>
    </ligand>
</feature>
<comment type="catalytic activity">
    <reaction evidence="1">
        <text>(S)-2,3,4,5-tetrahydrodipicolinate + succinyl-CoA + H2O = (S)-2-succinylamino-6-oxoheptanedioate + CoA</text>
        <dbReference type="Rhea" id="RHEA:17325"/>
        <dbReference type="ChEBI" id="CHEBI:15377"/>
        <dbReference type="ChEBI" id="CHEBI:15685"/>
        <dbReference type="ChEBI" id="CHEBI:16845"/>
        <dbReference type="ChEBI" id="CHEBI:57287"/>
        <dbReference type="ChEBI" id="CHEBI:57292"/>
        <dbReference type="EC" id="2.3.1.117"/>
    </reaction>
</comment>
<comment type="pathway">
    <text evidence="1">Amino-acid biosynthesis; L-lysine biosynthesis via DAP pathway; LL-2,6-diaminopimelate from (S)-tetrahydrodipicolinate (succinylase route): step 1/3.</text>
</comment>
<comment type="subunit">
    <text evidence="1">Homotrimer.</text>
</comment>
<comment type="subcellular location">
    <subcellularLocation>
        <location evidence="1">Cytoplasm</location>
    </subcellularLocation>
</comment>
<comment type="similarity">
    <text evidence="1">Belongs to the transferase hexapeptide repeat family.</text>
</comment>
<organism>
    <name type="scientific">Xylella fastidiosa (strain Temecula1 / ATCC 700964)</name>
    <dbReference type="NCBI Taxonomy" id="183190"/>
    <lineage>
        <taxon>Bacteria</taxon>
        <taxon>Pseudomonadati</taxon>
        <taxon>Pseudomonadota</taxon>
        <taxon>Gammaproteobacteria</taxon>
        <taxon>Lysobacterales</taxon>
        <taxon>Lysobacteraceae</taxon>
        <taxon>Xylella</taxon>
    </lineage>
</organism>
<reference key="1">
    <citation type="journal article" date="2003" name="J. Bacteriol.">
        <title>Comparative analyses of the complete genome sequences of Pierce's disease and citrus variegated chlorosis strains of Xylella fastidiosa.</title>
        <authorList>
            <person name="Van Sluys M.A."/>
            <person name="de Oliveira M.C."/>
            <person name="Monteiro-Vitorello C.B."/>
            <person name="Miyaki C.Y."/>
            <person name="Furlan L.R."/>
            <person name="Camargo L.E.A."/>
            <person name="da Silva A.C.R."/>
            <person name="Moon D.H."/>
            <person name="Takita M.A."/>
            <person name="Lemos E.G.M."/>
            <person name="Machado M.A."/>
            <person name="Ferro M.I.T."/>
            <person name="da Silva F.R."/>
            <person name="Goldman M.H.S."/>
            <person name="Goldman G.H."/>
            <person name="Lemos M.V.F."/>
            <person name="El-Dorry H."/>
            <person name="Tsai S.M."/>
            <person name="Carrer H."/>
            <person name="Carraro D.M."/>
            <person name="de Oliveira R.C."/>
            <person name="Nunes L.R."/>
            <person name="Siqueira W.J."/>
            <person name="Coutinho L.L."/>
            <person name="Kimura E.T."/>
            <person name="Ferro E.S."/>
            <person name="Harakava R."/>
            <person name="Kuramae E.E."/>
            <person name="Marino C.L."/>
            <person name="Giglioti E."/>
            <person name="Abreu I.L."/>
            <person name="Alves L.M.C."/>
            <person name="do Amaral A.M."/>
            <person name="Baia G.S."/>
            <person name="Blanco S.R."/>
            <person name="Brito M.S."/>
            <person name="Cannavan F.S."/>
            <person name="Celestino A.V."/>
            <person name="da Cunha A.F."/>
            <person name="Fenille R.C."/>
            <person name="Ferro J.A."/>
            <person name="Formighieri E.F."/>
            <person name="Kishi L.T."/>
            <person name="Leoni S.G."/>
            <person name="Oliveira A.R."/>
            <person name="Rosa V.E. Jr."/>
            <person name="Sassaki F.T."/>
            <person name="Sena J.A.D."/>
            <person name="de Souza A.A."/>
            <person name="Truffi D."/>
            <person name="Tsukumo F."/>
            <person name="Yanai G.M."/>
            <person name="Zaros L.G."/>
            <person name="Civerolo E.L."/>
            <person name="Simpson A.J.G."/>
            <person name="Almeida N.F. Jr."/>
            <person name="Setubal J.C."/>
            <person name="Kitajima J.P."/>
        </authorList>
    </citation>
    <scope>NUCLEOTIDE SEQUENCE [LARGE SCALE GENOMIC DNA]</scope>
    <source>
        <strain>Temecula1 / ATCC 700964</strain>
    </source>
</reference>
<name>DAPD_XYLFT</name>
<evidence type="ECO:0000255" key="1">
    <source>
        <dbReference type="HAMAP-Rule" id="MF_00811"/>
    </source>
</evidence>
<sequence length="277" mass="29889">MDKTLVSAIEDAFARYSTLTVEEIEDSIRPTVNRVIDGLETGAFRVAEPDNHGGWKVNEWLKKAVLLYFRVHDTTIVDAQPAPFWDKVESRFSGYDAVKFRAAGVRVVPGAIARRGSYFGKDVVLMPSFTNIGAYVGEGTMIDTWATVGSCAQLGAHCHLSGGAAIGGVLEPLQASPAIIEDHCFIGARSEVVEGVIVGHHSVIGMGVFISQSTRIYNRATGEISYGYVPPYSVVVSGQLPAKDGTHSLYCAVIVKQVDEKTRAKTSINELLRGLAD</sequence>
<protein>
    <recommendedName>
        <fullName evidence="1">2,3,4,5-tetrahydropyridine-2,6-dicarboxylate N-succinyltransferase</fullName>
        <ecNumber evidence="1">2.3.1.117</ecNumber>
    </recommendedName>
    <alternativeName>
        <fullName evidence="1">Tetrahydrodipicolinate N-succinyltransferase</fullName>
        <shortName evidence="1">THDP succinyltransferase</shortName>
        <shortName evidence="1">THP succinyltransferase</shortName>
        <shortName evidence="1">Tetrahydropicolinate succinylase</shortName>
    </alternativeName>
</protein>
<dbReference type="EC" id="2.3.1.117" evidence="1"/>
<dbReference type="EMBL" id="AE009442">
    <property type="protein sequence ID" value="AAO27986.1"/>
    <property type="molecule type" value="Genomic_DNA"/>
</dbReference>
<dbReference type="SMR" id="Q87F51"/>
<dbReference type="KEGG" id="xft:PD_0086"/>
<dbReference type="HOGENOM" id="CLU_050859_0_1_6"/>
<dbReference type="UniPathway" id="UPA00034">
    <property type="reaction ID" value="UER00019"/>
</dbReference>
<dbReference type="Proteomes" id="UP000002516">
    <property type="component" value="Chromosome"/>
</dbReference>
<dbReference type="GO" id="GO:0005737">
    <property type="term" value="C:cytoplasm"/>
    <property type="evidence" value="ECO:0007669"/>
    <property type="project" value="UniProtKB-SubCell"/>
</dbReference>
<dbReference type="GO" id="GO:0008666">
    <property type="term" value="F:2,3,4,5-tetrahydropyridine-2,6-dicarboxylate N-succinyltransferase activity"/>
    <property type="evidence" value="ECO:0007669"/>
    <property type="project" value="UniProtKB-UniRule"/>
</dbReference>
<dbReference type="GO" id="GO:0016779">
    <property type="term" value="F:nucleotidyltransferase activity"/>
    <property type="evidence" value="ECO:0007669"/>
    <property type="project" value="TreeGrafter"/>
</dbReference>
<dbReference type="GO" id="GO:0019877">
    <property type="term" value="P:diaminopimelate biosynthetic process"/>
    <property type="evidence" value="ECO:0007669"/>
    <property type="project" value="UniProtKB-UniRule"/>
</dbReference>
<dbReference type="GO" id="GO:0009089">
    <property type="term" value="P:lysine biosynthetic process via diaminopimelate"/>
    <property type="evidence" value="ECO:0007669"/>
    <property type="project" value="UniProtKB-UniRule"/>
</dbReference>
<dbReference type="CDD" id="cd03350">
    <property type="entry name" value="LbH_THP_succinylT"/>
    <property type="match status" value="1"/>
</dbReference>
<dbReference type="Gene3D" id="2.160.10.10">
    <property type="entry name" value="Hexapeptide repeat proteins"/>
    <property type="match status" value="1"/>
</dbReference>
<dbReference type="Gene3D" id="1.10.166.10">
    <property type="entry name" value="Tetrahydrodipicolinate-N-succinyltransferase, N-terminal domain"/>
    <property type="match status" value="1"/>
</dbReference>
<dbReference type="HAMAP" id="MF_00811">
    <property type="entry name" value="DapD"/>
    <property type="match status" value="1"/>
</dbReference>
<dbReference type="InterPro" id="IPR005664">
    <property type="entry name" value="DapD_Trfase_Hexpep_rpt_fam"/>
</dbReference>
<dbReference type="InterPro" id="IPR001451">
    <property type="entry name" value="Hexapep"/>
</dbReference>
<dbReference type="InterPro" id="IPR023180">
    <property type="entry name" value="THP_succinylTrfase_dom1"/>
</dbReference>
<dbReference type="InterPro" id="IPR037133">
    <property type="entry name" value="THP_succinylTrfase_N_sf"/>
</dbReference>
<dbReference type="InterPro" id="IPR011004">
    <property type="entry name" value="Trimer_LpxA-like_sf"/>
</dbReference>
<dbReference type="NCBIfam" id="TIGR00965">
    <property type="entry name" value="dapD"/>
    <property type="match status" value="1"/>
</dbReference>
<dbReference type="NCBIfam" id="NF008808">
    <property type="entry name" value="PRK11830.1"/>
    <property type="match status" value="1"/>
</dbReference>
<dbReference type="PANTHER" id="PTHR19136:SF52">
    <property type="entry name" value="2,3,4,5-TETRAHYDROPYRIDINE-2,6-DICARBOXYLATE N-SUCCINYLTRANSFERASE"/>
    <property type="match status" value="1"/>
</dbReference>
<dbReference type="PANTHER" id="PTHR19136">
    <property type="entry name" value="MOLYBDENUM COFACTOR GUANYLYLTRANSFERASE"/>
    <property type="match status" value="1"/>
</dbReference>
<dbReference type="Pfam" id="PF14602">
    <property type="entry name" value="Hexapep_2"/>
    <property type="match status" value="1"/>
</dbReference>
<dbReference type="Pfam" id="PF14805">
    <property type="entry name" value="THDPS_N_2"/>
    <property type="match status" value="1"/>
</dbReference>
<dbReference type="SUPFAM" id="SSF51161">
    <property type="entry name" value="Trimeric LpxA-like enzymes"/>
    <property type="match status" value="1"/>
</dbReference>